<sequence>MGHLWLSGTWFLFGLLWCAADSHKGSSETIPKVTEVIPKYGSINGATRLTIKGEGFSQASQFNYGADNTELGNHVQLVSSFQSITCDVEKDSSHSTQITCYTRAMPEDTYSVRVSVDGVPVAENNTCKGVASSWACSFSTKSFRTPTIRSITPLSGTPGTLITIKGRLFTDVYGSNTALSSNGRNVRILRIYIGGMPCELLIPHSDDLYGLKLDHANGDTGSVTCKTTGTYIGHHNVSFILDSDYGRSFPEKMTYFVSSLNKISMFQTYPEVVMVSPSKGSTEGGTLLTIHGHFFDQTDLPVRVLVGGQACAILNVTENTIYCKTPPKPHILKATYPGGRGLKVEVWNNSRPAHLEDILEYNEHTPGYMGATWTDSASYVWPIEQDTFVARISGFLVPPDSDVYRFYIRGDDRYAIYFSQTGRTEDKVRIAYYSGNANTYFSNSTQRSDEIHLQKGKEYYIEILLQEYTLSAFVDVGLYQYKNVFTEQQTGDALNEEQVIKSQSTVVPEVQIITLENWETADVTNEVQQVTVTSPCVGANSCSLSQYRFIYNMEKTVWLPADASDFTLKSALNDLWSIKPDSVQVTSKRDLQSYIYTITFVSTRGDFDLLGYEVFEGSNVTLSITEQTKGKPNLETFTLNWDGIASKPLTPESSEAEFQVAVEEMVSAKCPPEIAHLEEGFLVKYFRDYETDFELEHINRGQKTAETDAYCGRYSLKNPAVLFDSTDVKPNKSPYGDILLFPYNQLCLAYKGSLANFIDLKFKYQDSGKIIRSADVQFEYNFASGNKWTYTCIDLLDFLQTKYAGTSFSLQRITLQKSSEFQSIYVDAVYIGQTPTVSVLDDMPKRRPPALANKGIFLKHFQVNRTKLNGSAMTIQYSVTITSYNCSHNIPMMAVSFGQIITNETKNELVYRGNNWPGESKIRIQKIQEASPPISGSFDVQAYGHTLKGIPAAVPAADLQFALQSLEEIEQVSVNREGTCAGYSWSIRWTSPRGKQPLLQINDSNIIGEKANVTVTTIKEGGLFRQRIPGDMLRTLNQQPQVEVYVNGIPAKCSGDCGFTWDAMITPLILTTTPSEGSYAESTILTIAGSGFSPTSAVSVSVGSTRCSLLSVEENEIKCQILNGSAGHVPVAVSIADVGLAQNLEGEGSHFIYRSQISHVWPDSGSLAGGTLLTISGFGFSENSTVLVGNETCNVIEGDLNRITCRTSKRIEGTVDISVITNGIQVTAKDSFSYSCLQTPVVTDFSPKERTVLGKVNLTIKGYNFGNELAQNTVYVGRKHCQVLHSNFTDITCLLPTLPPGKHDIYVKVRNWGLASTRNKLNASILYILEVIHMFPQRGSLYGGTEITIMGFGFSTIPTENSVLLGSFPCDITSSSENVIKCTLHSTGTVFRITNNGSHLVHGLGYAWSPSVLNVTVGDTVVWSWQAHPFLRGIGYRIFSVSSPGSVTYDDKGFTNGRQKSASGSFSYQFTSPGIYYYSSGYVDEAHSISLQGVINVFPAEARHIPLYLFVGNIEATYVPAGPAHLQLASTAAGCLATEPLCGLNDTRVKHSNKLFFELSNCISPSIINITPSTGTANELITIIGHGFSSLPCANKVTIGSYPCVVEESSENSIICHIDPQNSMNVGIREIVTLIVYNLGTAINTLTKAFDRRFVLLPNIDMVMPKAGSTTGMTRVTIQGSGFMSSPEGVEVFMGDFPCKVLSVTYTAIECETSPAPQQLVLVDILIHGVPAQCQSNCSFSYLENIAPYVTGIFPNSIQGYGNVLIKGERFGTVLEEISIFIGSQQFRVIDVNENNITVLMTPLEAGLHSLSVVVGSKGLALGNLTISSPAVASVSPTSGSIAGGTTLMITGNGFSPGNTTVTVGDQPCQITFISSSEVYCSTPAGRAGTANLKISVNAIIYPPLSFTYAMEDTPFLKRIIPNRGLPGTEVEITGSNLGFAISDVSVMIKESVCNVTTVNDTVLQCTVGEHAGGIFPVTMLHKTKGSAVSSVAFEYPLSIQNIYPTQGSFGGGQTLTVTGMGFDPWNSTILVCNSECAVDKLRSNSTTLFCVIPPNNGKGHDQVCGVSVVNGKDSSHSTKLFTYTLSLTPLITEISPRRGSTAGGTRLTVTGSGFSENTQGVQVFVGNSKCDIQYSNKTHIVCMTSVHVPSGWVPVHVNIKNIGLAKLENADFLYADVWSANSSWGGSPPPEEGSLAVITKGQIILLDQSTPILKMLLIQGGTLIFDEANIELQAENILITDGGVLQIGTEASPFQHRAVITLHGHLRSPELPVYGAKTLGVREGTLDLHGLPIPVVWTRLTHTANAGEWTLTVQEAVTWKAGDNIVIASTGHRHSQAENEKRTIASVSADGMHITLTKPLNYTHLGITTTLPDGTVFEARAEVGILTRNILIRGSDNVEWNDKIPSCPDGFDTGEFATQTCLQGKFGEEMGSDQFGGCIMLHAPLPGADMVTGRIEYVEVFHAGQSFRLGRYPIHWHLLGDLQFKSYVKGCAIHQSYNRAITIHNTHHLLVERNIIYDIKGGAFFIEDGIEHGNILQYNLAVFVQQSTSLLNDDVTPAAFWVTNPNNTIRHNAAAGGTHFGFWYRMNDHPDGPSFDRNICQKRIPLGEFFNNTVHSQGWFGLWIFEEYFPMQTGSCTSTVPVPAIFNSLTVWNCQKGAEWVNGGALQFHNFVMVNNNEAGIETKRILAPYVGGWGESNGAVIKNAKIVGHLDELGMGPTFCTSKGLVLPFSQGLTVSSVHFMNFDRHACVALGVTSITGVCNDRCGGWSAKFVGIRYFHAPNKGGFRWEHEAVLIDVDGSLTGHRGHTVVPHSSLLDPSHCTQEPAWSIGFPGSICDASVSFHRLAFNKPSPVSLLEKDVVLSDSFGTSIVPFQKKRLTHMSGWMALIPNANHINWYFKGVEHLTNISYTSTFYGFKEEDYVIISHNFTQNPDMFNVVDMRNGSANPLNWNSSKNGDWHLEANTSTLYYLVSGRSDLPQSQPISGTLDPGVKDVIINFQAYCCVLQDCFPVHPPSRKPIPRKRPAAYNLWSNESFWQSSPENNYTVPRPGANVIIPEGTWIVADVDIPPVERLIIWGVLEMEDKSEIGVAGPTYRRVVLNATYISVQGGRLIGGWEDNPFKGELQIVLRGNHSTPEWAFPDGPNQGAKVLGVFGELDLHGLPHSVYKTKLLETAEAGSKILSLVDAVDWQEGEDVVITTTSYDLHQTEIRRIAKILHGHKILILNDSLSYTHLAERQWISGTAQSYTLSADVGILSRNIKIVGDDYSVLSKDSFGARILVGSFTGNMMTFKGNARISNVEFHHSGQEGYRDSTDPRYAVTFLNLGQIQDHGLSYVRGCAFHHVFSPAIGVFGTDGVDIDDNIIYFTVGEGIRIWGDANRVRGNLVTLSVWPGTYQNRKDLSSTLWHAAIEINRGTNTVLQNNVVAGFGRVGYRIDGEPCSSQANSMENWFNNEAHGGLYGIYMNQDGLPGCSLIQGFTIWTCWDYGIYFQTTESVHIYNVTLVNNGMSIFSMVYMPPSVSHKISSKTVKIKNSLIVGSSPEFNCSDVLTNDSPDVELTSAHRSSRPPSGGRSGICWPTFASAHNMAPRKPHAGIMSYNAISGLLHVSDSTFVGFKDVCSGETNVIFITNPLNEDLQHPIHVKNVQLIDTIEQSKVFIHRPDISKVNPSDCVDMVCDAKRKSFLRDLDGSFLGNSGSVIPQAEYEWDGNSQLGIGDYRIPKAMLTYLNGSRIPVTEKAPHKGIIRDATCKYIPEWQSYQCSGMEYAMMVLESLDSDTETRRLSPVAIMSNGYVDLINGPQDHGWCAGYTCQRRLSLFHGIVALNKKYEVYFTGTSPQNLRLMLLNVEHNKAVLVGIFFSTLQRLDVYVNNSLVCPKNTAWNAQKKHCELERHLSTEQFLPNLGSTVPGENYFDRTYQMLYLFLKGTTPVEVHTATVIFVSFHLPVMTADEFFSSHNLVRNLALFLKIPSDKIRVSRIIGASLRKKRSTGHIMEFEIGAAPTQFLSNSTTGQMQLSELQEITDSLGQAVVLGKISTILGFNISSMSITSPIPQPTDSGWIKVTAQPVERSAFPVHYLALVSSLSVVAQPVAAQPGQPFPQQPSVKAVDPEGNCVSVGITSLTLKAILKDSNNNQVGGLSGNTTIPFSTCWANYTDLTPHRTGKNYKIEFVLDNTVRVDSRPFSLSAQSVPGGSGSSPGSGSSSSGHSKASSVGTPVQTLAVITACLVGRLLLLEVFMAAVFILNTTVGIN</sequence>
<feature type="signal peptide" evidence="1">
    <location>
        <begin position="1"/>
        <end position="20"/>
    </location>
</feature>
<feature type="chain" id="PRO_0000318573" description="Fibrocystin-L">
    <location>
        <begin position="21"/>
        <end position="4249"/>
    </location>
</feature>
<feature type="topological domain" description="Extracellular" evidence="1 9">
    <location>
        <begin position="21"/>
        <end position="4222"/>
    </location>
</feature>
<feature type="transmembrane region" description="Helical" evidence="1">
    <location>
        <begin position="4223"/>
        <end position="4243"/>
    </location>
</feature>
<feature type="topological domain" description="Cytoplasmic" evidence="1">
    <location>
        <begin position="4244"/>
        <end position="4249"/>
    </location>
</feature>
<feature type="domain" description="IPT/TIG 1">
    <location>
        <begin position="31"/>
        <end position="132"/>
    </location>
</feature>
<feature type="domain" description="IPT/TIG 2">
    <location>
        <begin position="146"/>
        <end position="255"/>
    </location>
</feature>
<feature type="domain" description="IPT/TIG 3">
    <location>
        <begin position="270"/>
        <end position="361"/>
    </location>
</feature>
<feature type="domain" description="PA14" evidence="3">
    <location>
        <begin position="337"/>
        <end position="492"/>
    </location>
</feature>
<feature type="domain" description="IPT/TIG 4">
    <location>
        <begin position="1067"/>
        <end position="1153"/>
    </location>
</feature>
<feature type="domain" description="IPT/TIG 5">
    <location>
        <begin position="1155"/>
        <end position="1234"/>
    </location>
</feature>
<feature type="domain" description="IPT/TIG 6">
    <location>
        <begin position="1240"/>
        <end position="1323"/>
    </location>
</feature>
<feature type="domain" description="IPT/TIG 7">
    <location>
        <begin position="1329"/>
        <end position="1468"/>
    </location>
</feature>
<feature type="domain" description="IPT/TIG 8">
    <location>
        <begin position="1565"/>
        <end position="1648"/>
    </location>
</feature>
<feature type="domain" description="IPT/TIG 9">
    <location>
        <begin position="1658"/>
        <end position="1742"/>
    </location>
</feature>
<feature type="domain" description="IPT/TIG 10">
    <location>
        <begin position="1748"/>
        <end position="1827"/>
    </location>
</feature>
<feature type="domain" description="IPT/TIG 11">
    <location>
        <begin position="1830"/>
        <end position="1909"/>
    </location>
</feature>
<feature type="domain" description="IPT/TIG 12">
    <location>
        <begin position="1915"/>
        <end position="1996"/>
    </location>
</feature>
<feature type="domain" description="IPT/TIG 13">
    <location>
        <begin position="1998"/>
        <end position="2084"/>
    </location>
</feature>
<feature type="domain" description="IPT/TIG 14">
    <location>
        <begin position="2090"/>
        <end position="2175"/>
    </location>
</feature>
<feature type="domain" description="G8 1" evidence="2">
    <location>
        <begin position="2183"/>
        <end position="2303"/>
    </location>
</feature>
<feature type="repeat" description="PbH1 1">
    <location>
        <begin position="2484"/>
        <end position="2506"/>
    </location>
</feature>
<feature type="repeat" description="PbH1 2">
    <location>
        <begin position="2507"/>
        <end position="2529"/>
    </location>
</feature>
<feature type="repeat" description="PbH1 3">
    <location>
        <begin position="2565"/>
        <end position="2587"/>
    </location>
</feature>
<feature type="repeat" description="PbH1 4">
    <location>
        <begin position="2664"/>
        <end position="2686"/>
    </location>
</feature>
<feature type="repeat" description="PbH1 5">
    <location>
        <begin position="2732"/>
        <end position="2755"/>
    </location>
</feature>
<feature type="domain" description="G8 2" evidence="2">
    <location>
        <begin position="3035"/>
        <end position="3173"/>
    </location>
</feature>
<feature type="repeat" description="PbH1 6">
    <location>
        <begin position="3292"/>
        <end position="3314"/>
    </location>
</feature>
<feature type="repeat" description="PbH1 7">
    <location>
        <begin position="3354"/>
        <end position="3376"/>
    </location>
</feature>
<feature type="repeat" description="PbH1 8">
    <location>
        <begin position="3415"/>
        <end position="3437"/>
    </location>
</feature>
<feature type="repeat" description="PbH1 9">
    <location>
        <begin position="3470"/>
        <end position="3492"/>
    </location>
</feature>
<feature type="repeat" description="PbH1 10">
    <location>
        <begin position="3493"/>
        <end position="3514"/>
    </location>
</feature>
<feature type="region of interest" description="Disordered" evidence="4">
    <location>
        <begin position="4183"/>
        <end position="4208"/>
    </location>
</feature>
<feature type="compositionally biased region" description="Low complexity" evidence="4">
    <location>
        <begin position="4197"/>
        <end position="4208"/>
    </location>
</feature>
<feature type="glycosylation site" description="O-linked (GalNAc...) threonine" evidence="1">
    <location>
        <position position="1297"/>
    </location>
</feature>
<feature type="glycosylation site" description="O-linked (GalNAc...) threonine" evidence="1">
    <location>
        <position position="1359"/>
    </location>
</feature>
<feature type="glycosylation site" description="O-linked (GalNAc...) threonine" evidence="1">
    <location>
        <position position="1838"/>
    </location>
</feature>
<feature type="glycosylation site" description="O-linked (GalNAc...) threonine" evidence="1">
    <location>
        <position position="3735"/>
    </location>
</feature>
<feature type="splice variant" id="VSP_031226" description="In isoform 2." evidence="7">
    <original>LPGTEVEITGSNLGFAISD</original>
    <variation>TPASTCLFIYCIDVMLQLY</variation>
    <location>
        <begin position="1926"/>
        <end position="1944"/>
    </location>
</feature>
<feature type="splice variant" id="VSP_031227" description="In isoform 2." evidence="7">
    <location>
        <begin position="1945"/>
        <end position="4249"/>
    </location>
</feature>
<proteinExistence type="evidence at protein level"/>
<organism>
    <name type="scientific">Mus musculus</name>
    <name type="common">Mouse</name>
    <dbReference type="NCBI Taxonomy" id="10090"/>
    <lineage>
        <taxon>Eukaryota</taxon>
        <taxon>Metazoa</taxon>
        <taxon>Chordata</taxon>
        <taxon>Craniata</taxon>
        <taxon>Vertebrata</taxon>
        <taxon>Euteleostomi</taxon>
        <taxon>Mammalia</taxon>
        <taxon>Eutheria</taxon>
        <taxon>Euarchontoglires</taxon>
        <taxon>Glires</taxon>
        <taxon>Rodentia</taxon>
        <taxon>Myomorpha</taxon>
        <taxon>Muroidea</taxon>
        <taxon>Muridae</taxon>
        <taxon>Murinae</taxon>
        <taxon>Mus</taxon>
        <taxon>Mus</taxon>
    </lineage>
</organism>
<protein>
    <recommendedName>
        <fullName>Fibrocystin-L</fullName>
    </recommendedName>
    <alternativeName>
        <fullName>Polycystic kidney and hepatic disease 1-like protein 1</fullName>
        <shortName>PKHD1-like protein 1</shortName>
    </alternativeName>
    <alternativeName>
        <fullName>Protein D86</fullName>
    </alternativeName>
</protein>
<gene>
    <name type="primary">Pkhd1l1</name>
</gene>
<comment type="function">
    <text evidence="5">Component of hair-cell stereocilia coat. Required for normal hearing.</text>
</comment>
<comment type="subcellular location">
    <subcellularLocation>
        <location evidence="8">Membrane</location>
        <topology evidence="8">Single-pass membrane protein</topology>
    </subcellularLocation>
    <subcellularLocation>
        <location evidence="5">Cell projection</location>
        <location evidence="5">Stereocilium membrane</location>
    </subcellularLocation>
    <text evidence="5">Predominantly located at the upper half of the stereocilia of inner ear outer hair cell.</text>
</comment>
<comment type="alternative products">
    <event type="alternative splicing"/>
    <isoform>
        <id>Q80ZA4-1</id>
        <name>1</name>
        <sequence type="displayed"/>
    </isoform>
    <isoform>
        <id>Q80ZA4-2</id>
        <name>2</name>
        <sequence type="described" ref="VSP_031226 VSP_031227"/>
    </isoform>
</comment>
<comment type="tissue specificity">
    <text evidence="5 6">Expressed in neurons in the hippocampus and the cerebral cortex (at protein level) (PubMed:36067019). Transiently expressed at high levels in inner ear hair cells, predominantly in outer hair cells, during early postnatal development (at protein level) (PubMed:31444330).</text>
</comment>
<comment type="developmental stage">
    <text evidence="5">Expression in inner ear hair cells starts at birth (P0) and remains strong from P2 to P7. Expression gradually decreases from P9 to P12 and is no longer detected at P14. Very low expression, if any, at 16 dpc.</text>
</comment>
<keyword id="KW-0025">Alternative splicing</keyword>
<keyword id="KW-1003">Cell membrane</keyword>
<keyword id="KW-0966">Cell projection</keyword>
<keyword id="KW-0325">Glycoprotein</keyword>
<keyword id="KW-0472">Membrane</keyword>
<keyword id="KW-1185">Reference proteome</keyword>
<keyword id="KW-0677">Repeat</keyword>
<keyword id="KW-0732">Signal</keyword>
<keyword id="KW-0812">Transmembrane</keyword>
<keyword id="KW-1133">Transmembrane helix</keyword>
<reference key="1">
    <citation type="journal article" date="2003" name="Hum. Mol. Genet.">
        <title>PKHDL1, a homolog of the autosomal recessive polycystic kidney disease gene, encodes a receptor with inducible T lymphocyte expression.</title>
        <authorList>
            <person name="Hogan M.C."/>
            <person name="Griffin M.D."/>
            <person name="Rossetti S."/>
            <person name="Torres V.E."/>
            <person name="Ward C.J."/>
            <person name="Harris P.C."/>
        </authorList>
    </citation>
    <scope>NUCLEOTIDE SEQUENCE [MRNA] (ISOFORM 1)</scope>
    <source>
        <strain>C57BL/6J</strain>
    </source>
</reference>
<reference key="2">
    <citation type="submission" date="2001-02" db="EMBL/GenBank/DDBJ databases">
        <title>Novel protein secreted from lymphocytes.</title>
        <authorList>
            <person name="Sato H."/>
            <person name="Taniguchi M."/>
        </authorList>
    </citation>
    <scope>NUCLEOTIDE SEQUENCE [MRNA] (ISOFORM 2)</scope>
    <source>
        <tissue>Lymphocyte</tissue>
    </source>
</reference>
<reference key="3">
    <citation type="journal article" date="2010" name="Cell">
        <title>A tissue-specific atlas of mouse protein phosphorylation and expression.</title>
        <authorList>
            <person name="Huttlin E.L."/>
            <person name="Jedrychowski M.P."/>
            <person name="Elias J.E."/>
            <person name="Goswami T."/>
            <person name="Rad R."/>
            <person name="Beausoleil S.A."/>
            <person name="Villen J."/>
            <person name="Haas W."/>
            <person name="Sowa M.E."/>
            <person name="Gygi S.P."/>
        </authorList>
    </citation>
    <scope>IDENTIFICATION BY MASS SPECTROMETRY [LARGE SCALE ANALYSIS]</scope>
    <source>
        <tissue>Spleen</tissue>
    </source>
</reference>
<reference key="4">
    <citation type="journal article" date="2019" name="Nat. Commun.">
        <title>PKHD1L1 is a coat protein of hair-cell stereocilia and is required for normal hearing.</title>
        <authorList>
            <person name="Wu X."/>
            <person name="Ivanchenko M.V."/>
            <person name="Al Jandal H."/>
            <person name="Cicconet M."/>
            <person name="Indzhykulian A.A."/>
            <person name="Corey D.P."/>
        </authorList>
    </citation>
    <scope>FUNCTION</scope>
    <scope>SUBCELLULAR LOCATION</scope>
    <scope>TISSUE SPECIFICITY</scope>
    <scope>DEVELOPMENTAL STAGE</scope>
</reference>
<reference key="5">
    <citation type="journal article" date="2023" name="Hum. Mol. Genet.">
        <title>Deficit of PKHD1L1 in the dentate gyrus increases seizure susceptibility in mice.</title>
        <authorList>
            <person name="Yu J."/>
            <person name="Wang G."/>
            <person name="Chen Z."/>
            <person name="Wan L."/>
            <person name="Zhou J."/>
            <person name="Cai J."/>
            <person name="Liu X."/>
            <person name="Wang Y."/>
        </authorList>
    </citation>
    <scope>TISSUE SPECIFICITY</scope>
</reference>
<accession>Q80ZA4</accession>
<accession>Q99PS9</accession>
<dbReference type="EMBL" id="AY219182">
    <property type="protein sequence ID" value="AAO60073.1"/>
    <property type="molecule type" value="mRNA"/>
</dbReference>
<dbReference type="EMBL" id="AB055648">
    <property type="protein sequence ID" value="BAB32449.1"/>
    <property type="molecule type" value="mRNA"/>
</dbReference>
<dbReference type="CCDS" id="CCDS84169.1">
    <molecule id="Q80ZA4-1"/>
</dbReference>
<dbReference type="RefSeq" id="NP_619615.2">
    <molecule id="Q80ZA4-1"/>
    <property type="nucleotide sequence ID" value="NM_138674.2"/>
</dbReference>
<dbReference type="SMR" id="Q80ZA4"/>
<dbReference type="FunCoup" id="Q80ZA4">
    <property type="interactions" value="2"/>
</dbReference>
<dbReference type="STRING" id="10090.ENSMUSP00000147447"/>
<dbReference type="GlyCosmos" id="Q80ZA4">
    <property type="glycosylation" value="4 sites, No reported glycans"/>
</dbReference>
<dbReference type="GlyGen" id="Q80ZA4">
    <property type="glycosylation" value="9 sites, 3 N-linked glycans (3 sites)"/>
</dbReference>
<dbReference type="iPTMnet" id="Q80ZA4"/>
<dbReference type="PhosphoSitePlus" id="Q80ZA4"/>
<dbReference type="PaxDb" id="10090-ENSMUSP00000129522"/>
<dbReference type="ProteomicsDB" id="289659">
    <molecule id="Q80ZA4-1"/>
</dbReference>
<dbReference type="ProteomicsDB" id="289660">
    <molecule id="Q80ZA4-2"/>
</dbReference>
<dbReference type="Antibodypedia" id="26574">
    <property type="antibodies" value="20 antibodies from 9 providers"/>
</dbReference>
<dbReference type="DNASU" id="192190"/>
<dbReference type="Ensembl" id="ENSMUST00000209244.2">
    <molecule id="Q80ZA4-1"/>
    <property type="protein sequence ID" value="ENSMUSP00000147447.2"/>
    <property type="gene ID" value="ENSMUSG00000038725.14"/>
</dbReference>
<dbReference type="GeneID" id="192190"/>
<dbReference type="KEGG" id="mmu:192190"/>
<dbReference type="UCSC" id="uc007vpx.1">
    <molecule id="Q80ZA4-2"/>
    <property type="organism name" value="mouse"/>
</dbReference>
<dbReference type="UCSC" id="uc007vpy.1">
    <molecule id="Q80ZA4-1"/>
    <property type="organism name" value="mouse"/>
</dbReference>
<dbReference type="AGR" id="MGI:2183153"/>
<dbReference type="CTD" id="93035"/>
<dbReference type="MGI" id="MGI:2183153">
    <property type="gene designation" value="Pkhd1l1"/>
</dbReference>
<dbReference type="VEuPathDB" id="HostDB:ENSMUSG00000038725"/>
<dbReference type="eggNOG" id="KOG3610">
    <property type="taxonomic scope" value="Eukaryota"/>
</dbReference>
<dbReference type="GeneTree" id="ENSGT00940000157594"/>
<dbReference type="InParanoid" id="Q80ZA4"/>
<dbReference type="OMA" id="RSFPQKM"/>
<dbReference type="OrthoDB" id="120976at2759"/>
<dbReference type="PhylomeDB" id="Q80ZA4"/>
<dbReference type="BioGRID-ORCS" id="192190">
    <property type="hits" value="3 hits in 22 CRISPR screens"/>
</dbReference>
<dbReference type="ChiTaRS" id="Pkhd1l1">
    <property type="organism name" value="mouse"/>
</dbReference>
<dbReference type="PRO" id="PR:Q80ZA4"/>
<dbReference type="Proteomes" id="UP000000589">
    <property type="component" value="Chromosome 15"/>
</dbReference>
<dbReference type="RNAct" id="Q80ZA4">
    <property type="molecule type" value="protein"/>
</dbReference>
<dbReference type="Bgee" id="ENSMUSG00000038725">
    <property type="expression patterns" value="Expressed in ureteric bud trunk and 51 other cell types or tissues"/>
</dbReference>
<dbReference type="ExpressionAtlas" id="Q80ZA4">
    <property type="expression patterns" value="baseline and differential"/>
</dbReference>
<dbReference type="GO" id="GO:0120234">
    <property type="term" value="C:stereocilium coat"/>
    <property type="evidence" value="ECO:0000314"/>
    <property type="project" value="MGI"/>
</dbReference>
<dbReference type="GO" id="GO:0060171">
    <property type="term" value="C:stereocilium membrane"/>
    <property type="evidence" value="ECO:0007669"/>
    <property type="project" value="UniProtKB-SubCell"/>
</dbReference>
<dbReference type="GO" id="GO:0032426">
    <property type="term" value="C:stereocilium tip"/>
    <property type="evidence" value="ECO:0000314"/>
    <property type="project" value="MGI"/>
</dbReference>
<dbReference type="GO" id="GO:0007605">
    <property type="term" value="P:sensory perception of sound"/>
    <property type="evidence" value="ECO:0000315"/>
    <property type="project" value="MGI"/>
</dbReference>
<dbReference type="CDD" id="cd00603">
    <property type="entry name" value="IPT_PCSR"/>
    <property type="match status" value="12"/>
</dbReference>
<dbReference type="FunFam" id="2.60.40.420:FF:000065">
    <property type="entry name" value="Fibrocystin-L"/>
    <property type="match status" value="1"/>
</dbReference>
<dbReference type="FunFam" id="2.160.20.10:FF:000031">
    <property type="entry name" value="PKHD1 like 1"/>
    <property type="match status" value="1"/>
</dbReference>
<dbReference type="FunFam" id="2.60.40.10:FF:000616">
    <property type="entry name" value="PKHD1 like 1"/>
    <property type="match status" value="2"/>
</dbReference>
<dbReference type="FunFam" id="2.60.40.10:FF:000857">
    <property type="entry name" value="PKHD1 like 1"/>
    <property type="match status" value="1"/>
</dbReference>
<dbReference type="FunFam" id="2.60.40.10:FF:001057">
    <property type="entry name" value="PKHD1 like 1"/>
    <property type="match status" value="1"/>
</dbReference>
<dbReference type="FunFam" id="2.60.40.10:FF:001162">
    <property type="entry name" value="PKHD1 like 1"/>
    <property type="match status" value="1"/>
</dbReference>
<dbReference type="FunFam" id="2.60.40.10:FF:001165">
    <property type="entry name" value="PKHD1 like 1"/>
    <property type="match status" value="1"/>
</dbReference>
<dbReference type="FunFam" id="2.60.40.10:FF:001195">
    <property type="entry name" value="PKHD1 like 1"/>
    <property type="match status" value="1"/>
</dbReference>
<dbReference type="FunFam" id="2.60.40.10:FF:001202">
    <property type="entry name" value="PKHD1 like 1"/>
    <property type="match status" value="1"/>
</dbReference>
<dbReference type="FunFam" id="2.60.40.10:FF:001220">
    <property type="entry name" value="PKHD1 like 1"/>
    <property type="match status" value="1"/>
</dbReference>
<dbReference type="FunFam" id="2.60.40.10:FF:001292">
    <property type="entry name" value="PKHD1 like 1"/>
    <property type="match status" value="1"/>
</dbReference>
<dbReference type="FunFam" id="2.60.40.10:FF:001316">
    <property type="entry name" value="PKHD1 like 1"/>
    <property type="match status" value="1"/>
</dbReference>
<dbReference type="FunFam" id="2.60.40.10:FF:001332">
    <property type="entry name" value="PKHD1 like 1"/>
    <property type="match status" value="1"/>
</dbReference>
<dbReference type="FunFam" id="2.60.40.10:FF:001552">
    <property type="entry name" value="PKHD1 like 1"/>
    <property type="match status" value="1"/>
</dbReference>
<dbReference type="FunFam" id="2.60.40.10:FF:001567">
    <property type="entry name" value="PKHD1 like 1"/>
    <property type="match status" value="1"/>
</dbReference>
<dbReference type="Gene3D" id="2.60.40.420">
    <property type="entry name" value="Cupredoxins - blue copper proteins"/>
    <property type="match status" value="1"/>
</dbReference>
<dbReference type="Gene3D" id="2.60.40.10">
    <property type="entry name" value="Immunoglobulins"/>
    <property type="match status" value="14"/>
</dbReference>
<dbReference type="Gene3D" id="2.160.20.10">
    <property type="entry name" value="Single-stranded right-handed beta-helix, Pectin lyase-like"/>
    <property type="match status" value="1"/>
</dbReference>
<dbReference type="InterPro" id="IPR055401">
    <property type="entry name" value="CEMIP_beta-hel_dom"/>
</dbReference>
<dbReference type="InterPro" id="IPR008972">
    <property type="entry name" value="Cupredoxin"/>
</dbReference>
<dbReference type="InterPro" id="IPR052387">
    <property type="entry name" value="Fibrocystin"/>
</dbReference>
<dbReference type="InterPro" id="IPR019316">
    <property type="entry name" value="G8_domain"/>
</dbReference>
<dbReference type="InterPro" id="IPR013783">
    <property type="entry name" value="Ig-like_fold"/>
</dbReference>
<dbReference type="InterPro" id="IPR014756">
    <property type="entry name" value="Ig_E-set"/>
</dbReference>
<dbReference type="InterPro" id="IPR002909">
    <property type="entry name" value="IPT_dom"/>
</dbReference>
<dbReference type="InterPro" id="IPR037524">
    <property type="entry name" value="PA14/GLEYA"/>
</dbReference>
<dbReference type="InterPro" id="IPR011658">
    <property type="entry name" value="PA14_dom"/>
</dbReference>
<dbReference type="InterPro" id="IPR006626">
    <property type="entry name" value="PbH1"/>
</dbReference>
<dbReference type="InterPro" id="IPR012334">
    <property type="entry name" value="Pectin_lyas_fold"/>
</dbReference>
<dbReference type="InterPro" id="IPR011050">
    <property type="entry name" value="Pectin_lyase_fold/virulence"/>
</dbReference>
<dbReference type="PANTHER" id="PTHR46769:SF3">
    <property type="entry name" value="FIBROCYSTIN-L"/>
    <property type="match status" value="1"/>
</dbReference>
<dbReference type="PANTHER" id="PTHR46769">
    <property type="entry name" value="POLYCYSTIC KIDNEY AND HEPATIC DISEASE 1 (AUTOSOMAL RECESSIVE)-LIKE 1"/>
    <property type="match status" value="1"/>
</dbReference>
<dbReference type="Pfam" id="PF24606">
    <property type="entry name" value="CEMIP_beta-hel"/>
    <property type="match status" value="2"/>
</dbReference>
<dbReference type="Pfam" id="PF10162">
    <property type="entry name" value="G8"/>
    <property type="match status" value="2"/>
</dbReference>
<dbReference type="Pfam" id="PF07691">
    <property type="entry name" value="PA14"/>
    <property type="match status" value="1"/>
</dbReference>
<dbReference type="Pfam" id="PF01833">
    <property type="entry name" value="TIG"/>
    <property type="match status" value="14"/>
</dbReference>
<dbReference type="SMART" id="SM01225">
    <property type="entry name" value="G8"/>
    <property type="match status" value="2"/>
</dbReference>
<dbReference type="SMART" id="SM00429">
    <property type="entry name" value="IPT"/>
    <property type="match status" value="10"/>
</dbReference>
<dbReference type="SMART" id="SM00758">
    <property type="entry name" value="PA14"/>
    <property type="match status" value="1"/>
</dbReference>
<dbReference type="SMART" id="SM00710">
    <property type="entry name" value="PbH1"/>
    <property type="match status" value="12"/>
</dbReference>
<dbReference type="SUPFAM" id="SSF56988">
    <property type="entry name" value="Anthrax protective antigen"/>
    <property type="match status" value="1"/>
</dbReference>
<dbReference type="SUPFAM" id="SSF49503">
    <property type="entry name" value="Cupredoxins"/>
    <property type="match status" value="1"/>
</dbReference>
<dbReference type="SUPFAM" id="SSF81296">
    <property type="entry name" value="E set domains"/>
    <property type="match status" value="14"/>
</dbReference>
<dbReference type="SUPFAM" id="SSF51126">
    <property type="entry name" value="Pectin lyase-like"/>
    <property type="match status" value="1"/>
</dbReference>
<dbReference type="PROSITE" id="PS51484">
    <property type="entry name" value="G8"/>
    <property type="match status" value="2"/>
</dbReference>
<dbReference type="PROSITE" id="PS51820">
    <property type="entry name" value="PA14"/>
    <property type="match status" value="1"/>
</dbReference>
<name>PKHL1_MOUSE</name>
<evidence type="ECO:0000255" key="1"/>
<evidence type="ECO:0000255" key="2">
    <source>
        <dbReference type="PROSITE-ProRule" id="PRU00817"/>
    </source>
</evidence>
<evidence type="ECO:0000255" key="3">
    <source>
        <dbReference type="PROSITE-ProRule" id="PRU01164"/>
    </source>
</evidence>
<evidence type="ECO:0000256" key="4">
    <source>
        <dbReference type="SAM" id="MobiDB-lite"/>
    </source>
</evidence>
<evidence type="ECO:0000269" key="5">
    <source>
    </source>
</evidence>
<evidence type="ECO:0000269" key="6">
    <source>
    </source>
</evidence>
<evidence type="ECO:0000303" key="7">
    <source ref="2"/>
</evidence>
<evidence type="ECO:0000305" key="8"/>
<evidence type="ECO:0000305" key="9">
    <source>
    </source>
</evidence>